<dbReference type="EMBL" id="DW986463">
    <property type="status" value="NOT_ANNOTATED_CDS"/>
    <property type="molecule type" value="mRNA"/>
</dbReference>
<dbReference type="SMR" id="P86727"/>
<dbReference type="GO" id="GO:0005576">
    <property type="term" value="C:extracellular region"/>
    <property type="evidence" value="ECO:0000314"/>
    <property type="project" value="UniProtKB"/>
</dbReference>
<organism>
    <name type="scientific">Haliotis asinina</name>
    <name type="common">Donkey's ear abalone</name>
    <name type="synonym">Ass's ear abalone</name>
    <dbReference type="NCBI Taxonomy" id="109174"/>
    <lineage>
        <taxon>Eukaryota</taxon>
        <taxon>Metazoa</taxon>
        <taxon>Spiralia</taxon>
        <taxon>Lophotrochozoa</taxon>
        <taxon>Mollusca</taxon>
        <taxon>Gastropoda</taxon>
        <taxon>Vetigastropoda</taxon>
        <taxon>Lepetellida</taxon>
        <taxon>Haliotoidea</taxon>
        <taxon>Haliotidae</taxon>
        <taxon>Haliotis</taxon>
    </lineage>
</organism>
<accession>P86727</accession>
<reference evidence="4" key="1">
    <citation type="journal article" date="2006" name="BMC Biol.">
        <title>A rapidly evolving secretome builds and patterns a sea shell.</title>
        <authorList>
            <person name="Jackson D.J."/>
            <person name="McDougall C."/>
            <person name="Green K."/>
            <person name="Simpson F."/>
            <person name="Woerheide G."/>
            <person name="Degnan B.M."/>
        </authorList>
    </citation>
    <scope>NUCLEOTIDE SEQUENCE [MRNA]</scope>
    <source>
        <tissue evidence="2">Mantle</tissue>
    </source>
</reference>
<reference evidence="4" key="2">
    <citation type="journal article" date="2010" name="Proteome Sci.">
        <title>Proteomic analysis of the organic matrix of the abalone Haliotis asinina calcified shell.</title>
        <authorList>
            <person name="Marie B."/>
            <person name="Marie A."/>
            <person name="Jackson D.J."/>
            <person name="Dubost L."/>
            <person name="Degnan B.M."/>
            <person name="Milet C."/>
            <person name="Marin F."/>
        </authorList>
    </citation>
    <scope>PROTEIN SEQUENCE OF 28-38 AND 92-117</scope>
    <scope>SUBCELLULAR LOCATION</scope>
    <scope>TISSUE SPECIFICITY</scope>
    <source>
        <tissue evidence="3">Shell</tissue>
    </source>
</reference>
<name>QRP_HALAI</name>
<proteinExistence type="evidence at protein level"/>
<feature type="chain" id="PRO_0000399446" description="Glutamine-rich protein">
    <location>
        <begin position="1"/>
        <end position="117"/>
    </location>
</feature>
<feature type="region of interest" description="Disordered" evidence="1">
    <location>
        <begin position="27"/>
        <end position="88"/>
    </location>
</feature>
<feature type="compositionally biased region" description="Low complexity" evidence="1">
    <location>
        <begin position="27"/>
        <end position="72"/>
    </location>
</feature>
<feature type="compositionally biased region" description="Polar residues" evidence="1">
    <location>
        <begin position="75"/>
        <end position="87"/>
    </location>
</feature>
<keyword id="KW-0903">Direct protein sequencing</keyword>
<keyword id="KW-0964">Secreted</keyword>
<sequence length="117" mass="13373">MAAYCQAQGLDVVLAALLGAINQQPSRQQFQQQQQQQRQPQLQQQQQQQGIQQQPQGLQHQQQQFGLTQQHGQGRRQNIVQPNPASQNNNRMMLDMLLLNQIAQSNRMNTLAFIMAN</sequence>
<comment type="subcellular location">
    <subcellularLocation>
        <location evidence="3">Secreted</location>
    </subcellularLocation>
</comment>
<comment type="tissue specificity">
    <text evidence="3">Component of the acid-soluble and acid-insoluble organic matrix of calcified shell layers (at protein level).</text>
</comment>
<evidence type="ECO:0000256" key="1">
    <source>
        <dbReference type="SAM" id="MobiDB-lite"/>
    </source>
</evidence>
<evidence type="ECO:0000269" key="2">
    <source>
    </source>
</evidence>
<evidence type="ECO:0000269" key="3">
    <source>
    </source>
</evidence>
<evidence type="ECO:0000305" key="4"/>
<protein>
    <recommendedName>
        <fullName>Glutamine-rich protein</fullName>
    </recommendedName>
</protein>